<feature type="chain" id="PRO_0000438132" description="Eukaryotic translation initiation factor 3 subunit D">
    <location>
        <begin position="1"/>
        <end position="558"/>
    </location>
</feature>
<feature type="region of interest" description="RNA gate" evidence="4">
    <location>
        <begin position="296"/>
        <end position="310"/>
    </location>
</feature>
<feature type="region of interest" description="Disordered" evidence="3">
    <location>
        <begin position="534"/>
        <end position="558"/>
    </location>
</feature>
<feature type="compositionally biased region" description="Acidic residues" evidence="3">
    <location>
        <begin position="537"/>
        <end position="551"/>
    </location>
</feature>
<feature type="strand" evidence="6">
    <location>
        <begin position="180"/>
        <end position="186"/>
    </location>
</feature>
<feature type="helix" evidence="6">
    <location>
        <begin position="187"/>
        <end position="192"/>
    </location>
</feature>
<feature type="strand" evidence="6">
    <location>
        <begin position="202"/>
        <end position="210"/>
    </location>
</feature>
<feature type="helix" evidence="6">
    <location>
        <begin position="215"/>
        <end position="219"/>
    </location>
</feature>
<feature type="helix" evidence="6">
    <location>
        <begin position="240"/>
        <end position="242"/>
    </location>
</feature>
<feature type="helix" evidence="6">
    <location>
        <begin position="244"/>
        <end position="249"/>
    </location>
</feature>
<feature type="turn" evidence="6">
    <location>
        <begin position="250"/>
        <end position="252"/>
    </location>
</feature>
<feature type="strand" evidence="6">
    <location>
        <begin position="255"/>
        <end position="259"/>
    </location>
</feature>
<feature type="helix" evidence="6">
    <location>
        <begin position="260"/>
        <end position="267"/>
    </location>
</feature>
<feature type="helix" evidence="6">
    <location>
        <begin position="269"/>
        <end position="271"/>
    </location>
</feature>
<feature type="strand" evidence="6">
    <location>
        <begin position="276"/>
        <end position="283"/>
    </location>
</feature>
<feature type="strand" evidence="6">
    <location>
        <begin position="286"/>
        <end position="290"/>
    </location>
</feature>
<feature type="strand" evidence="6">
    <location>
        <begin position="293"/>
        <end position="296"/>
    </location>
</feature>
<feature type="strand" evidence="6">
    <location>
        <begin position="306"/>
        <end position="308"/>
    </location>
</feature>
<feature type="strand" evidence="6">
    <location>
        <begin position="314"/>
        <end position="316"/>
    </location>
</feature>
<feature type="helix" evidence="6">
    <location>
        <begin position="320"/>
        <end position="337"/>
    </location>
</feature>
<feature type="helix" evidence="6">
    <location>
        <begin position="357"/>
        <end position="362"/>
    </location>
</feature>
<feature type="strand" evidence="6">
    <location>
        <begin position="365"/>
        <end position="374"/>
    </location>
</feature>
<feature type="strand" evidence="6">
    <location>
        <begin position="380"/>
        <end position="391"/>
    </location>
</feature>
<feature type="strand" evidence="6">
    <location>
        <begin position="399"/>
        <end position="409"/>
    </location>
</feature>
<feature type="turn" evidence="6">
    <location>
        <begin position="411"/>
        <end position="415"/>
    </location>
</feature>
<feature type="helix" evidence="6">
    <location>
        <begin position="419"/>
        <end position="437"/>
    </location>
</feature>
<feature type="helix" evidence="6">
    <location>
        <begin position="439"/>
        <end position="452"/>
    </location>
</feature>
<feature type="strand" evidence="6">
    <location>
        <begin position="455"/>
        <end position="466"/>
    </location>
</feature>
<feature type="strand" evidence="6">
    <location>
        <begin position="469"/>
        <end position="481"/>
    </location>
</feature>
<feature type="helix" evidence="6">
    <location>
        <begin position="483"/>
        <end position="489"/>
    </location>
</feature>
<feature type="helix" evidence="6">
    <location>
        <begin position="494"/>
        <end position="509"/>
    </location>
</feature>
<feature type="strand" evidence="6">
    <location>
        <begin position="513"/>
        <end position="520"/>
    </location>
</feature>
<feature type="strand" evidence="6">
    <location>
        <begin position="524"/>
        <end position="531"/>
    </location>
</feature>
<proteinExistence type="evidence at protein level"/>
<comment type="function">
    <text evidence="2">mRNA cap-binding component of the eukaryotic translation initiation factor 3 (eIF-3) complex, which is involved in protein synthesis of a specialized repertoire of mRNAs and, together with other initiation factors, stimulates binding of mRNA and methionyl-tRNAi to the 40S ribosome. The eIF-3 complex specifically targets and initiates translation of a subset of mRNAs involved in cell proliferation. In the eIF-3 complex, eif3d specifically recognizes and binds the 7-methylguanosine cap of a subset of mRNAs.</text>
</comment>
<comment type="subunit">
    <text evidence="1 2">Component of the eukaryotic translation initiation factor 3 (eIF-3) complex.</text>
</comment>
<comment type="subcellular location">
    <subcellularLocation>
        <location evidence="1 2">Cytoplasm</location>
    </subcellularLocation>
</comment>
<comment type="domain">
    <text evidence="5">The RNA gate region regulates mRNA cap recognition to prevent promiscuous mRNA-binding before assembly of eif3d into the full eukaryotic translation initiation factor 3 (eIF-3) complex.</text>
</comment>
<comment type="similarity">
    <text evidence="1 2">Belongs to the eIF-3 subunit D family.</text>
</comment>
<sequence>MANDENTDGVNKSEKMEKMCEFIRPMVQNNPDGWGPCELPDQFKDIPYQPFSKSDRLGKISDWTGTAYQDKKFQNKYNSQFGGSGMKAYAYEHDEDETTFHLVDTTRVQKPPYQRGRFGQRNQRMRGRGGQRGGMSQMQALGKLKIHERDRRGQNKRWTRRNQAPIKMRDASVTVRPDWVTIEEMDFPRLSKLTLPGVKEGEDVLCCGAVEYYDKSYDRVNVKNEKPLQRIDRIFHTVTTTDDPVIRKLSKTEGNVYATDAILATIMCCTRSNYSWDIVIEKIGNKLFFDKRDNTEFDLLTVNETSVEPPQDDGNSLNSPRNLALEATFINHNFSQQVLKSNEPRYKFDEPNPFISEEEEGEVASVAYRYRKWDLNNGITLIARCEHDAVMQGPNNETQFLTIKALNEWDSKLANGVEWRRKLDTQRGAVLANELRNNACKLAKWTVQALLAGSDQLKFGYVSRASVRDSSKHVILETQQYKPNEFATQINLNMDNAWGILRCIIDICMNQKDGKYLIMKDPNKPMIRLYDIPDNTFESEGEEEDSDEEEQVKDAFQR</sequence>
<protein>
    <recommendedName>
        <fullName evidence="2">Eukaryotic translation initiation factor 3 subunit D</fullName>
        <shortName evidence="2">eIF3d</shortName>
    </recommendedName>
    <alternativeName>
        <fullName evidence="2">Eukaryotic translation initiation factor 3 subunit 7</fullName>
    </alternativeName>
</protein>
<dbReference type="RefSeq" id="XP_001605972.1">
    <property type="nucleotide sequence ID" value="XM_001605922.6"/>
</dbReference>
<dbReference type="PDB" id="5K4B">
    <property type="method" value="X-ray"/>
    <property type="resolution" value="1.40 A"/>
    <property type="chains" value="A/B=172-537"/>
</dbReference>
<dbReference type="PDB" id="5K4C">
    <property type="method" value="X-ray"/>
    <property type="resolution" value="1.70 A"/>
    <property type="chains" value="A=172-537"/>
</dbReference>
<dbReference type="PDB" id="5K4D">
    <property type="method" value="X-ray"/>
    <property type="resolution" value="2.00 A"/>
    <property type="chains" value="A/B=172-537"/>
</dbReference>
<dbReference type="PDB" id="6W2T">
    <property type="method" value="EM"/>
    <property type="resolution" value="3.36 A"/>
    <property type="chains" value="9=1-558"/>
</dbReference>
<dbReference type="PDBsum" id="5K4B"/>
<dbReference type="PDBsum" id="5K4C"/>
<dbReference type="PDBsum" id="5K4D"/>
<dbReference type="PDBsum" id="6W2T"/>
<dbReference type="EMDB" id="EMD-21530"/>
<dbReference type="SMR" id="K7IM66"/>
<dbReference type="FunCoup" id="K7IM66">
    <property type="interactions" value="2577"/>
</dbReference>
<dbReference type="STRING" id="7425.K7IM66"/>
<dbReference type="EnsemblMetazoa" id="XM_001605922">
    <property type="protein sequence ID" value="XP_001605972"/>
    <property type="gene ID" value="LOC100122367"/>
</dbReference>
<dbReference type="GeneID" id="100122367"/>
<dbReference type="KEGG" id="nvi:100122367"/>
<dbReference type="CTD" id="42789"/>
<dbReference type="eggNOG" id="KOG2479">
    <property type="taxonomic scope" value="Eukaryota"/>
</dbReference>
<dbReference type="HOGENOM" id="CLU_024521_2_0_1"/>
<dbReference type="InParanoid" id="K7IM66"/>
<dbReference type="OMA" id="FMDKRDN"/>
<dbReference type="OrthoDB" id="16538at2759"/>
<dbReference type="PhylomeDB" id="K7IM66"/>
<dbReference type="Proteomes" id="UP000002358">
    <property type="component" value="Chromosome 1"/>
</dbReference>
<dbReference type="GO" id="GO:0016282">
    <property type="term" value="C:eukaryotic 43S preinitiation complex"/>
    <property type="evidence" value="ECO:0007669"/>
    <property type="project" value="UniProtKB-UniRule"/>
</dbReference>
<dbReference type="GO" id="GO:0033290">
    <property type="term" value="C:eukaryotic 48S preinitiation complex"/>
    <property type="evidence" value="ECO:0007669"/>
    <property type="project" value="UniProtKB-UniRule"/>
</dbReference>
<dbReference type="GO" id="GO:0005852">
    <property type="term" value="C:eukaryotic translation initiation factor 3 complex"/>
    <property type="evidence" value="ECO:0007669"/>
    <property type="project" value="UniProtKB-UniRule"/>
</dbReference>
<dbReference type="GO" id="GO:0098808">
    <property type="term" value="F:mRNA cap binding"/>
    <property type="evidence" value="ECO:0000314"/>
    <property type="project" value="UniProtKB"/>
</dbReference>
<dbReference type="GO" id="GO:0003743">
    <property type="term" value="F:translation initiation factor activity"/>
    <property type="evidence" value="ECO:0007669"/>
    <property type="project" value="UniProtKB-UniRule"/>
</dbReference>
<dbReference type="GO" id="GO:0002191">
    <property type="term" value="P:cap-dependent translational initiation"/>
    <property type="evidence" value="ECO:0007669"/>
    <property type="project" value="UniProtKB-UniRule"/>
</dbReference>
<dbReference type="GO" id="GO:0001732">
    <property type="term" value="P:formation of cytoplasmic translation initiation complex"/>
    <property type="evidence" value="ECO:0007669"/>
    <property type="project" value="UniProtKB-UniRule"/>
</dbReference>
<dbReference type="HAMAP" id="MF_03003">
    <property type="entry name" value="eIF3d"/>
    <property type="match status" value="1"/>
</dbReference>
<dbReference type="InterPro" id="IPR007783">
    <property type="entry name" value="eIF3d"/>
</dbReference>
<dbReference type="PANTHER" id="PTHR12399">
    <property type="entry name" value="EUKARYOTIC TRANSLATION INITIATION FACTOR 3 SUBUNIT 7"/>
    <property type="match status" value="1"/>
</dbReference>
<dbReference type="PANTHER" id="PTHR12399:SF0">
    <property type="entry name" value="EUKARYOTIC TRANSLATION INITIATION FACTOR 3 SUBUNIT D"/>
    <property type="match status" value="1"/>
</dbReference>
<dbReference type="Pfam" id="PF05091">
    <property type="entry name" value="eIF-3_zeta"/>
    <property type="match status" value="1"/>
</dbReference>
<dbReference type="PIRSF" id="PIRSF016281">
    <property type="entry name" value="EIF-3_zeta"/>
    <property type="match status" value="1"/>
</dbReference>
<keyword id="KW-0002">3D-structure</keyword>
<keyword id="KW-0963">Cytoplasm</keyword>
<keyword id="KW-0396">Initiation factor</keyword>
<keyword id="KW-0648">Protein biosynthesis</keyword>
<keyword id="KW-1185">Reference proteome</keyword>
<keyword id="KW-0694">RNA-binding</keyword>
<accession>K7IM66</accession>
<evidence type="ECO:0000255" key="1"/>
<evidence type="ECO:0000255" key="2">
    <source>
        <dbReference type="HAMAP-Rule" id="MF_03003"/>
    </source>
</evidence>
<evidence type="ECO:0000256" key="3">
    <source>
        <dbReference type="SAM" id="MobiDB-lite"/>
    </source>
</evidence>
<evidence type="ECO:0000269" key="4">
    <source>
    </source>
</evidence>
<evidence type="ECO:0000305" key="5">
    <source>
    </source>
</evidence>
<evidence type="ECO:0007829" key="6">
    <source>
        <dbReference type="PDB" id="5K4B"/>
    </source>
</evidence>
<reference key="1">
    <citation type="journal article" date="2010" name="Science">
        <title>Functional and evolutionary insights from the genomes of three parasitoid Nasonia species.</title>
        <authorList>
            <consortium name="Nasonia Genome Working Group"/>
            <person name="Werren J.H."/>
            <person name="Richards S."/>
            <person name="Desjardins C.A."/>
            <person name="Niehuis O."/>
            <person name="Gadau J."/>
            <person name="Colbourne J.K."/>
            <person name="Werren J.H."/>
            <person name="Richards S."/>
            <person name="Desjardins C.A."/>
            <person name="Niehuis O."/>
            <person name="Gadau J."/>
            <person name="Colbourne J.K."/>
            <person name="Beukeboom L.W."/>
            <person name="Desplan C."/>
            <person name="Elsik C.G."/>
            <person name="Grimmelikhuijzen C.J."/>
            <person name="Kitts P."/>
            <person name="Lynch J.A."/>
            <person name="Murphy T."/>
            <person name="Oliveira D.C."/>
            <person name="Smith C.D."/>
            <person name="van de Zande L."/>
            <person name="Worley K.C."/>
            <person name="Zdobnov E.M."/>
            <person name="Aerts M."/>
            <person name="Albert S."/>
            <person name="Anaya V.H."/>
            <person name="Anzola J.M."/>
            <person name="Barchuk A.R."/>
            <person name="Behura S.K."/>
            <person name="Bera A.N."/>
            <person name="Berenbaum M.R."/>
            <person name="Bertossa R.C."/>
            <person name="Bitondi M.M."/>
            <person name="Bordenstein S.R."/>
            <person name="Bork P."/>
            <person name="Bornberg-Bauer E."/>
            <person name="Brunain M."/>
            <person name="Cazzamali G."/>
            <person name="Chaboub L."/>
            <person name="Chacko J."/>
            <person name="Chavez D."/>
            <person name="Childers C.P."/>
            <person name="Choi J.H."/>
            <person name="Clark M.E."/>
            <person name="Claudianos C."/>
            <person name="Clinton R.A."/>
            <person name="Cree A.G."/>
            <person name="Cristino A.S."/>
            <person name="Dang P.M."/>
            <person name="Darby A.C."/>
            <person name="de Graaf D.C."/>
            <person name="Devreese B."/>
            <person name="Dinh H.H."/>
            <person name="Edwards R."/>
            <person name="Elango N."/>
            <person name="Elhaik E."/>
            <person name="Ermolaeva O."/>
            <person name="Evans J.D."/>
            <person name="Foret S."/>
            <person name="Fowler G.R."/>
            <person name="Gerlach D."/>
            <person name="Gibson J.D."/>
            <person name="Gilbert D.G."/>
            <person name="Graur D."/>
            <person name="Grunder S."/>
            <person name="Hagen D.E."/>
            <person name="Han Y."/>
            <person name="Hauser F."/>
            <person name="Hultmark D."/>
            <person name="Hunter H.C. IV"/>
            <person name="Hurst G.D."/>
            <person name="Jhangian S.N."/>
            <person name="Jiang H."/>
            <person name="Johnson R.M."/>
            <person name="Jones A.K."/>
            <person name="Junier T."/>
            <person name="Kadowaki T."/>
            <person name="Kamping A."/>
            <person name="Kapustin Y."/>
            <person name="Kechavarzi B."/>
            <person name="Kim J."/>
            <person name="Kim J."/>
            <person name="Kiryutin B."/>
            <person name="Koevoets T."/>
            <person name="Kovar C.L."/>
            <person name="Kriventseva E.V."/>
            <person name="Kucharski R."/>
            <person name="Lee H."/>
            <person name="Lee S.L."/>
            <person name="Lees K."/>
            <person name="Lewis L.R."/>
            <person name="Loehlin D.W."/>
            <person name="Logsdon J.M. Jr."/>
            <person name="Lopez J.A."/>
            <person name="Lozado R.J."/>
            <person name="Maglott D."/>
            <person name="Maleszka R."/>
            <person name="Mayampurath A."/>
            <person name="Mazur D.J."/>
            <person name="McClure M.A."/>
            <person name="Moore A.D."/>
            <person name="Morgan M.B."/>
            <person name="Muller J."/>
            <person name="Munoz-Torres M.C."/>
            <person name="Muzny D.M."/>
            <person name="Nazareth L.V."/>
            <person name="Neupert S."/>
            <person name="Nguyen N.B."/>
            <person name="Nunes F.M."/>
            <person name="Oakeshott J.G."/>
            <person name="Okwuonu G.O."/>
            <person name="Pannebakker B.A."/>
            <person name="Pejaver V.R."/>
            <person name="Peng Z."/>
            <person name="Pratt S.C."/>
            <person name="Predel R."/>
            <person name="Pu L.L."/>
            <person name="Ranson H."/>
            <person name="Raychoudhury R."/>
            <person name="Rechtsteiner A."/>
            <person name="Reese J.T."/>
            <person name="Reid J.G."/>
            <person name="Riddle M."/>
            <person name="Robertson H.M."/>
            <person name="Romero-Severson J."/>
            <person name="Rosenberg M."/>
            <person name="Sackton T.B."/>
            <person name="Sattelle D.B."/>
            <person name="Schluns H."/>
            <person name="Schmitt T."/>
            <person name="Schneider M."/>
            <person name="Schuler A."/>
            <person name="Schurko A.M."/>
            <person name="Shuker D.M."/>
            <person name="Simoes Z.L."/>
            <person name="Sinha S."/>
            <person name="Smith Z."/>
            <person name="Solovyev V."/>
            <person name="Souvorov A."/>
            <person name="Springauf A."/>
            <person name="Stafflinger E."/>
            <person name="Stage D.E."/>
            <person name="Stanke M."/>
            <person name="Tanaka Y."/>
            <person name="Telschow A."/>
            <person name="Trent C."/>
            <person name="Vattathil S."/>
            <person name="Verhulst E.C."/>
            <person name="Viljakainen L."/>
            <person name="Wanner K.W."/>
            <person name="Waterhouse R.M."/>
            <person name="Whitfield J.B."/>
            <person name="Wilkes T.E."/>
            <person name="Williamson M."/>
            <person name="Willis J.H."/>
            <person name="Wolschin F."/>
            <person name="Wyder S."/>
            <person name="Yamada T."/>
            <person name="Yi S.V."/>
            <person name="Zecher C.N."/>
            <person name="Zhang L."/>
            <person name="Gibbs R.A."/>
        </authorList>
    </citation>
    <scope>NUCLEOTIDE SEQUENCE [LARGE SCALE GENOMIC DNA]</scope>
    <source>
        <strain>AsymCX</strain>
    </source>
</reference>
<reference key="2">
    <citation type="journal article" date="2016" name="Nature">
        <title>eIF3d is an mRNA cap-binding protein that is required for specialized translation initiation.</title>
        <authorList>
            <person name="Lee A.S."/>
            <person name="Kranzusch P.J."/>
            <person name="Doudna J.A."/>
            <person name="Cate J.H."/>
        </authorList>
    </citation>
    <scope>X-RAY CRYSTALLOGRAPHY (1.4 ANGSTROMS) OF 172-537</scope>
    <scope>DOMAIN</scope>
</reference>
<organism>
    <name type="scientific">Nasonia vitripennis</name>
    <name type="common">Parasitic wasp</name>
    <dbReference type="NCBI Taxonomy" id="7425"/>
    <lineage>
        <taxon>Eukaryota</taxon>
        <taxon>Metazoa</taxon>
        <taxon>Ecdysozoa</taxon>
        <taxon>Arthropoda</taxon>
        <taxon>Hexapoda</taxon>
        <taxon>Insecta</taxon>
        <taxon>Pterygota</taxon>
        <taxon>Neoptera</taxon>
        <taxon>Endopterygota</taxon>
        <taxon>Hymenoptera</taxon>
        <taxon>Apocrita</taxon>
        <taxon>Proctotrupomorpha</taxon>
        <taxon>Chalcidoidea</taxon>
        <taxon>Pteromalidae</taxon>
        <taxon>Pteromalinae</taxon>
        <taxon>Nasonia</taxon>
    </lineage>
</organism>
<name>EIF3D_NASVI</name>